<proteinExistence type="predicted"/>
<organism>
    <name type="scientific">Arabidopsis thaliana</name>
    <name type="common">Mouse-ear cress</name>
    <dbReference type="NCBI Taxonomy" id="3702"/>
    <lineage>
        <taxon>Eukaryota</taxon>
        <taxon>Viridiplantae</taxon>
        <taxon>Streptophyta</taxon>
        <taxon>Embryophyta</taxon>
        <taxon>Tracheophyta</taxon>
        <taxon>Spermatophyta</taxon>
        <taxon>Magnoliopsida</taxon>
        <taxon>eudicotyledons</taxon>
        <taxon>Gunneridae</taxon>
        <taxon>Pentapetalae</taxon>
        <taxon>rosids</taxon>
        <taxon>malvids</taxon>
        <taxon>Brassicales</taxon>
        <taxon>Brassicaceae</taxon>
        <taxon>Camelineae</taxon>
        <taxon>Arabidopsis</taxon>
    </lineage>
</organism>
<keyword id="KW-1185">Reference proteome</keyword>
<sequence>MEKLKQQFSKDRLITPSSNLVRNYIDSIPVDLLIDILSRFPPKSIARFYCVSKLWESILRGPDFTELYLTKSVALRRLFFALKVNTELLVFSSPQPQIPDENSSLVVEATPYKCFPKKIPTEICTALGGLVFLGTFLSRQPLVIVNPLTGEFITLPKLKTIGTKRFSFGYDPISKKFKVLCVTWSPCGTLPNIHQVLTLETGERLWRTIHDPVIPRYSINYDAICINGVLYSEAYYQGSSKIVCFDFKIEKVSFVNIDGMCNLRLFNCKGKLGVHQYDVQSRNEKLVFHVLEDAEKHKWSKSICILPSVVSGKRIVEITCTGEIVFSPSGGSLHPFYIFFYNIERKTYTRVQIKGFKKYADCVHTFLDFVEDTKLI</sequence>
<feature type="chain" id="PRO_0000283330" description="Putative F-box protein At1g53370">
    <location>
        <begin position="1"/>
        <end position="376"/>
    </location>
</feature>
<feature type="domain" description="F-box" evidence="1">
    <location>
        <begin position="22"/>
        <end position="71"/>
    </location>
</feature>
<dbReference type="EMBL" id="AC008007">
    <property type="protein sequence ID" value="AAF69539.1"/>
    <property type="status" value="ALT_SEQ"/>
    <property type="molecule type" value="Genomic_DNA"/>
</dbReference>
<dbReference type="EMBL" id="CP002684">
    <property type="protein sequence ID" value="AEE32932.1"/>
    <property type="status" value="ALT_SEQ"/>
    <property type="molecule type" value="Genomic_DNA"/>
</dbReference>
<dbReference type="EMBL" id="CP002684">
    <property type="protein sequence ID" value="ANM59792.1"/>
    <property type="molecule type" value="Genomic_DNA"/>
</dbReference>
<dbReference type="RefSeq" id="NP_001322124.1">
    <property type="nucleotide sequence ID" value="NM_001333591.1"/>
</dbReference>
<dbReference type="RefSeq" id="NP_175743.1">
    <property type="nucleotide sequence ID" value="NM_104216.1"/>
</dbReference>
<dbReference type="SMR" id="Q9MAG5"/>
<dbReference type="FunCoup" id="Q9MAG5">
    <property type="interactions" value="2"/>
</dbReference>
<dbReference type="PaxDb" id="3702-AT1G53370.1"/>
<dbReference type="EnsemblPlants" id="AT1G53370.2">
    <property type="protein sequence ID" value="AT1G53370.2"/>
    <property type="gene ID" value="AT1G53370"/>
</dbReference>
<dbReference type="GeneID" id="841773"/>
<dbReference type="Gramene" id="AT1G53370.2">
    <property type="protein sequence ID" value="AT1G53370.2"/>
    <property type="gene ID" value="AT1G53370"/>
</dbReference>
<dbReference type="KEGG" id="ath:AT1G53370"/>
<dbReference type="Araport" id="AT1G53370"/>
<dbReference type="TAIR" id="AT1G53370"/>
<dbReference type="HOGENOM" id="CLU_027176_8_1_1"/>
<dbReference type="InParanoid" id="Q9MAG5"/>
<dbReference type="OMA" id="FEVEEPR"/>
<dbReference type="PhylomeDB" id="Q9MAG5"/>
<dbReference type="PRO" id="PR:Q9MAG5"/>
<dbReference type="Proteomes" id="UP000006548">
    <property type="component" value="Chromosome 1"/>
</dbReference>
<dbReference type="ExpressionAtlas" id="Q9MAG5">
    <property type="expression patterns" value="baseline"/>
</dbReference>
<dbReference type="CDD" id="cd22157">
    <property type="entry name" value="F-box_AtFBW1-like"/>
    <property type="match status" value="1"/>
</dbReference>
<dbReference type="Gene3D" id="1.20.1280.50">
    <property type="match status" value="1"/>
</dbReference>
<dbReference type="InterPro" id="IPR013187">
    <property type="entry name" value="F-box-assoc_dom_typ3"/>
</dbReference>
<dbReference type="InterPro" id="IPR017451">
    <property type="entry name" value="F-box-assoc_interact_dom"/>
</dbReference>
<dbReference type="InterPro" id="IPR036047">
    <property type="entry name" value="F-box-like_dom_sf"/>
</dbReference>
<dbReference type="InterPro" id="IPR001810">
    <property type="entry name" value="F-box_dom"/>
</dbReference>
<dbReference type="NCBIfam" id="TIGR01640">
    <property type="entry name" value="F_box_assoc_1"/>
    <property type="match status" value="1"/>
</dbReference>
<dbReference type="PANTHER" id="PTHR31111">
    <property type="entry name" value="BNAA05G37150D PROTEIN-RELATED"/>
    <property type="match status" value="1"/>
</dbReference>
<dbReference type="PANTHER" id="PTHR31111:SF65">
    <property type="entry name" value="F-BOX DOMAIN-CONTAINING PROTEIN"/>
    <property type="match status" value="1"/>
</dbReference>
<dbReference type="Pfam" id="PF00646">
    <property type="entry name" value="F-box"/>
    <property type="match status" value="1"/>
</dbReference>
<dbReference type="Pfam" id="PF08268">
    <property type="entry name" value="FBA_3"/>
    <property type="match status" value="1"/>
</dbReference>
<dbReference type="SMART" id="SM00256">
    <property type="entry name" value="FBOX"/>
    <property type="match status" value="1"/>
</dbReference>
<dbReference type="SUPFAM" id="SSF81383">
    <property type="entry name" value="F-box domain"/>
    <property type="match status" value="1"/>
</dbReference>
<dbReference type="PROSITE" id="PS50181">
    <property type="entry name" value="FBOX"/>
    <property type="match status" value="1"/>
</dbReference>
<gene>
    <name type="ordered locus">At1g53370</name>
    <name type="ORF">F12M16.26</name>
</gene>
<reference key="1">
    <citation type="journal article" date="2000" name="Nature">
        <title>Sequence and analysis of chromosome 1 of the plant Arabidopsis thaliana.</title>
        <authorList>
            <person name="Theologis A."/>
            <person name="Ecker J.R."/>
            <person name="Palm C.J."/>
            <person name="Federspiel N.A."/>
            <person name="Kaul S."/>
            <person name="White O."/>
            <person name="Alonso J."/>
            <person name="Altafi H."/>
            <person name="Araujo R."/>
            <person name="Bowman C.L."/>
            <person name="Brooks S.Y."/>
            <person name="Buehler E."/>
            <person name="Chan A."/>
            <person name="Chao Q."/>
            <person name="Chen H."/>
            <person name="Cheuk R.F."/>
            <person name="Chin C.W."/>
            <person name="Chung M.K."/>
            <person name="Conn L."/>
            <person name="Conway A.B."/>
            <person name="Conway A.R."/>
            <person name="Creasy T.H."/>
            <person name="Dewar K."/>
            <person name="Dunn P."/>
            <person name="Etgu P."/>
            <person name="Feldblyum T.V."/>
            <person name="Feng J.-D."/>
            <person name="Fong B."/>
            <person name="Fujii C.Y."/>
            <person name="Gill J.E."/>
            <person name="Goldsmith A.D."/>
            <person name="Haas B."/>
            <person name="Hansen N.F."/>
            <person name="Hughes B."/>
            <person name="Huizar L."/>
            <person name="Hunter J.L."/>
            <person name="Jenkins J."/>
            <person name="Johnson-Hopson C."/>
            <person name="Khan S."/>
            <person name="Khaykin E."/>
            <person name="Kim C.J."/>
            <person name="Koo H.L."/>
            <person name="Kremenetskaia I."/>
            <person name="Kurtz D.B."/>
            <person name="Kwan A."/>
            <person name="Lam B."/>
            <person name="Langin-Hooper S."/>
            <person name="Lee A."/>
            <person name="Lee J.M."/>
            <person name="Lenz C.A."/>
            <person name="Li J.H."/>
            <person name="Li Y.-P."/>
            <person name="Lin X."/>
            <person name="Liu S.X."/>
            <person name="Liu Z.A."/>
            <person name="Luros J.S."/>
            <person name="Maiti R."/>
            <person name="Marziali A."/>
            <person name="Militscher J."/>
            <person name="Miranda M."/>
            <person name="Nguyen M."/>
            <person name="Nierman W.C."/>
            <person name="Osborne B.I."/>
            <person name="Pai G."/>
            <person name="Peterson J."/>
            <person name="Pham P.K."/>
            <person name="Rizzo M."/>
            <person name="Rooney T."/>
            <person name="Rowley D."/>
            <person name="Sakano H."/>
            <person name="Salzberg S.L."/>
            <person name="Schwartz J.R."/>
            <person name="Shinn P."/>
            <person name="Southwick A.M."/>
            <person name="Sun H."/>
            <person name="Tallon L.J."/>
            <person name="Tambunga G."/>
            <person name="Toriumi M.J."/>
            <person name="Town C.D."/>
            <person name="Utterback T."/>
            <person name="Van Aken S."/>
            <person name="Vaysberg M."/>
            <person name="Vysotskaia V.S."/>
            <person name="Walker M."/>
            <person name="Wu D."/>
            <person name="Yu G."/>
            <person name="Fraser C.M."/>
            <person name="Venter J.C."/>
            <person name="Davis R.W."/>
        </authorList>
    </citation>
    <scope>NUCLEOTIDE SEQUENCE [LARGE SCALE GENOMIC DNA]</scope>
    <source>
        <strain>cv. Columbia</strain>
    </source>
</reference>
<reference key="2">
    <citation type="journal article" date="2017" name="Plant J.">
        <title>Araport11: a complete reannotation of the Arabidopsis thaliana reference genome.</title>
        <authorList>
            <person name="Cheng C.Y."/>
            <person name="Krishnakumar V."/>
            <person name="Chan A.P."/>
            <person name="Thibaud-Nissen F."/>
            <person name="Schobel S."/>
            <person name="Town C.D."/>
        </authorList>
    </citation>
    <scope>GENOME REANNOTATION</scope>
    <source>
        <strain>cv. Columbia</strain>
    </source>
</reference>
<name>FB56_ARATH</name>
<evidence type="ECO:0000255" key="1">
    <source>
        <dbReference type="PROSITE-ProRule" id="PRU00080"/>
    </source>
</evidence>
<evidence type="ECO:0000305" key="2"/>
<protein>
    <recommendedName>
        <fullName>Putative F-box protein At1g53370</fullName>
    </recommendedName>
</protein>
<comment type="sequence caution" evidence="2">
    <conflict type="erroneous gene model prediction">
        <sequence resource="EMBL-CDS" id="AAF69539"/>
    </conflict>
</comment>
<comment type="sequence caution" evidence="2">
    <conflict type="erroneous gene model prediction">
        <sequence resource="EMBL-CDS" id="AEE32932"/>
    </conflict>
</comment>
<accession>Q9MAG5</accession>
<accession>F4HRG6</accession>